<comment type="function">
    <text evidence="1">Plays a role in chromatin remodeling and regulation of transcription. Acts as a chromatin reader that recognizes and binds acylated histones: binds histones that are acetylated and/or butyrylated.</text>
</comment>
<comment type="subunit">
    <text evidence="1">Binds acetylated histones H3 and H4. Binds butyrylated histone H4.</text>
</comment>
<comment type="subcellular location">
    <subcellularLocation>
        <location evidence="1">Nucleus</location>
    </subcellularLocation>
</comment>
<comment type="domain">
    <text evidence="1">The Bromo domain mediates interaction with histones that have acetylated lysine residues at specific positions. Also recognizes and binds histones that are butyrylated.</text>
</comment>
<organism>
    <name type="scientific">Xenopus laevis</name>
    <name type="common">African clawed frog</name>
    <dbReference type="NCBI Taxonomy" id="8355"/>
    <lineage>
        <taxon>Eukaryota</taxon>
        <taxon>Metazoa</taxon>
        <taxon>Chordata</taxon>
        <taxon>Craniata</taxon>
        <taxon>Vertebrata</taxon>
        <taxon>Euteleostomi</taxon>
        <taxon>Amphibia</taxon>
        <taxon>Batrachia</taxon>
        <taxon>Anura</taxon>
        <taxon>Pipoidea</taxon>
        <taxon>Pipidae</taxon>
        <taxon>Xenopodinae</taxon>
        <taxon>Xenopus</taxon>
        <taxon>Xenopus</taxon>
    </lineage>
</organism>
<name>BRD9_XENLA</name>
<protein>
    <recommendedName>
        <fullName>Bromodomain-containing protein 9</fullName>
    </recommendedName>
</protein>
<keyword id="KW-0103">Bromodomain</keyword>
<keyword id="KW-0156">Chromatin regulator</keyword>
<keyword id="KW-0539">Nucleus</keyword>
<keyword id="KW-1185">Reference proteome</keyword>
<keyword id="KW-0804">Transcription</keyword>
<keyword id="KW-0805">Transcription regulation</keyword>
<accession>Q6GLP7</accession>
<sequence length="527" mass="60268">MNVSVTKRRKKKKKKKSEKEKDKYLDEDERRRRKEEKKRKREKEQCDSEGETEVFESIRKDIEATDRPVRTCRTHPENESTPLQQLLEYFLRQLQRKDPNGFFAFPVTDQIAPGYFMIIKNPMDFSTMKEKISQDEYKSVTEFKADFKLMCDNAMTYNRPETVYYKLAKKLLHTGFKMMSKAALLGNEVTTTEEPIPEIIMPTAAEVVKKSKKPSKDMFRVMEEDQSSIFEPEGNACSLTDSTAEEHVLALVEHAADEARDKLNQYFPNCRIGYLKKNTDGTLFYTVVNGDPDNEEDTHLVDLSSLSSKLLPSFTTLGFKEDRRHKVTFLNSTGTALSLQNNTLFTNLKPDQIELMYAGYGDDTGIQCALSLQEFVKDSGSFAKRMVNDLLDQITGGDHSRTIYQIKQMTGSEREGCSNSVLDFMTLKSYSDVSLDMSMLSSLDKVKKELEHEDSHLNLDDASKLLPDFHDVHNDRGGSRPSSSSSMSNNSERDHHLGSPSRISVGEQQDIHDPYEFLQSPETDNQN</sequence>
<dbReference type="EMBL" id="BC074412">
    <property type="protein sequence ID" value="AAH74412.1"/>
    <property type="molecule type" value="mRNA"/>
</dbReference>
<dbReference type="RefSeq" id="NP_001086274.1">
    <property type="nucleotide sequence ID" value="NM_001092805.1"/>
</dbReference>
<dbReference type="SMR" id="Q6GLP7"/>
<dbReference type="DNASU" id="444703"/>
<dbReference type="GeneID" id="444703"/>
<dbReference type="KEGG" id="xla:444703"/>
<dbReference type="AGR" id="Xenbase:XB-GENE-969476"/>
<dbReference type="CTD" id="444703"/>
<dbReference type="Xenbase" id="XB-GENE-969476">
    <property type="gene designation" value="brd9.L"/>
</dbReference>
<dbReference type="OrthoDB" id="21648at2759"/>
<dbReference type="Proteomes" id="UP000186698">
    <property type="component" value="Chromosome 6L"/>
</dbReference>
<dbReference type="Bgee" id="444703">
    <property type="expression patterns" value="Expressed in gastrula and 19 other cell types or tissues"/>
</dbReference>
<dbReference type="GO" id="GO:0005634">
    <property type="term" value="C:nucleus"/>
    <property type="evidence" value="ECO:0000250"/>
    <property type="project" value="UniProtKB"/>
</dbReference>
<dbReference type="GO" id="GO:0070577">
    <property type="term" value="F:lysine-acetylated histone binding"/>
    <property type="evidence" value="ECO:0000250"/>
    <property type="project" value="UniProtKB"/>
</dbReference>
<dbReference type="GO" id="GO:0006325">
    <property type="term" value="P:chromatin organization"/>
    <property type="evidence" value="ECO:0007669"/>
    <property type="project" value="UniProtKB-KW"/>
</dbReference>
<dbReference type="GO" id="GO:0006357">
    <property type="term" value="P:regulation of transcription by RNA polymerase II"/>
    <property type="evidence" value="ECO:0000318"/>
    <property type="project" value="GO_Central"/>
</dbReference>
<dbReference type="CDD" id="cd05513">
    <property type="entry name" value="Bromo_brd7_like"/>
    <property type="match status" value="1"/>
</dbReference>
<dbReference type="FunFam" id="1.20.920.10:FF:000022">
    <property type="entry name" value="Putative bromodomain-containing protein 9"/>
    <property type="match status" value="1"/>
</dbReference>
<dbReference type="Gene3D" id="1.20.920.10">
    <property type="entry name" value="Bromodomain-like"/>
    <property type="match status" value="1"/>
</dbReference>
<dbReference type="InterPro" id="IPR001487">
    <property type="entry name" value="Bromodomain"/>
</dbReference>
<dbReference type="InterPro" id="IPR036427">
    <property type="entry name" value="Bromodomain-like_sf"/>
</dbReference>
<dbReference type="InterPro" id="IPR051831">
    <property type="entry name" value="Bromodomain_contain_prot"/>
</dbReference>
<dbReference type="InterPro" id="IPR018359">
    <property type="entry name" value="Bromodomain_CS"/>
</dbReference>
<dbReference type="InterPro" id="IPR021900">
    <property type="entry name" value="DUF3512"/>
</dbReference>
<dbReference type="PANTHER" id="PTHR22881">
    <property type="entry name" value="BROMODOMAIN CONTAINING PROTEIN"/>
    <property type="match status" value="1"/>
</dbReference>
<dbReference type="PANTHER" id="PTHR22881:SF4">
    <property type="entry name" value="BROMODOMAIN-CONTAINING PROTEIN 9"/>
    <property type="match status" value="1"/>
</dbReference>
<dbReference type="Pfam" id="PF00439">
    <property type="entry name" value="Bromodomain"/>
    <property type="match status" value="1"/>
</dbReference>
<dbReference type="Pfam" id="PF12024">
    <property type="entry name" value="DUF3512"/>
    <property type="match status" value="1"/>
</dbReference>
<dbReference type="PRINTS" id="PR00503">
    <property type="entry name" value="BROMODOMAIN"/>
</dbReference>
<dbReference type="SMART" id="SM00297">
    <property type="entry name" value="BROMO"/>
    <property type="match status" value="1"/>
</dbReference>
<dbReference type="SUPFAM" id="SSF47370">
    <property type="entry name" value="Bromodomain"/>
    <property type="match status" value="1"/>
</dbReference>
<dbReference type="PROSITE" id="PS00633">
    <property type="entry name" value="BROMODOMAIN_1"/>
    <property type="match status" value="1"/>
</dbReference>
<dbReference type="PROSITE" id="PS50014">
    <property type="entry name" value="BROMODOMAIN_2"/>
    <property type="match status" value="1"/>
</dbReference>
<gene>
    <name type="primary">brd9</name>
</gene>
<reference key="1">
    <citation type="submission" date="2004-06" db="EMBL/GenBank/DDBJ databases">
        <authorList>
            <consortium name="NIH - Xenopus Gene Collection (XGC) project"/>
        </authorList>
    </citation>
    <scope>NUCLEOTIDE SEQUENCE [LARGE SCALE MRNA]</scope>
    <source>
        <tissue>Eye</tissue>
    </source>
</reference>
<feature type="chain" id="PRO_0000239222" description="Bromodomain-containing protein 9">
    <location>
        <begin position="1"/>
        <end position="527"/>
    </location>
</feature>
<feature type="domain" description="Bromo" evidence="2">
    <location>
        <begin position="78"/>
        <end position="182"/>
    </location>
</feature>
<feature type="region of interest" description="Disordered" evidence="3">
    <location>
        <begin position="1"/>
        <end position="54"/>
    </location>
</feature>
<feature type="region of interest" description="Histone H4K5ac H4K8ac and histone H4K5bu H4K8bu binding" evidence="1">
    <location>
        <begin position="156"/>
        <end position="158"/>
    </location>
</feature>
<feature type="region of interest" description="Disordered" evidence="3">
    <location>
        <begin position="468"/>
        <end position="527"/>
    </location>
</feature>
<feature type="compositionally biased region" description="Basic residues" evidence="3">
    <location>
        <begin position="1"/>
        <end position="16"/>
    </location>
</feature>
<feature type="compositionally biased region" description="Basic and acidic residues" evidence="3">
    <location>
        <begin position="17"/>
        <end position="30"/>
    </location>
</feature>
<feature type="compositionally biased region" description="Basic residues" evidence="3">
    <location>
        <begin position="31"/>
        <end position="41"/>
    </location>
</feature>
<feature type="compositionally biased region" description="Basic and acidic residues" evidence="3">
    <location>
        <begin position="468"/>
        <end position="478"/>
    </location>
</feature>
<feature type="compositionally biased region" description="Low complexity" evidence="3">
    <location>
        <begin position="479"/>
        <end position="490"/>
    </location>
</feature>
<feature type="site" description="Histone H4K5ac H4K8ac and histone H4K5bu H4K8bu binding" evidence="1">
    <location>
        <position position="111"/>
    </location>
</feature>
<feature type="site" description="Histone H4K5ac H4K8ac and histone H4K5bu H4K8bu binding" evidence="1">
    <location>
        <position position="164"/>
    </location>
</feature>
<proteinExistence type="evidence at transcript level"/>
<evidence type="ECO:0000250" key="1">
    <source>
        <dbReference type="UniProtKB" id="Q9H8M2"/>
    </source>
</evidence>
<evidence type="ECO:0000255" key="2">
    <source>
        <dbReference type="PROSITE-ProRule" id="PRU00035"/>
    </source>
</evidence>
<evidence type="ECO:0000256" key="3">
    <source>
        <dbReference type="SAM" id="MobiDB-lite"/>
    </source>
</evidence>